<reference key="1">
    <citation type="journal article" date="2007" name="J. Bacteriol.">
        <title>Complete genome of acute rheumatic fever-associated serotype M5 Streptococcus pyogenes strain Manfredo.</title>
        <authorList>
            <person name="Holden M.T.G."/>
            <person name="Scott A."/>
            <person name="Cherevach I."/>
            <person name="Chillingworth T."/>
            <person name="Churcher C."/>
            <person name="Cronin A."/>
            <person name="Dowd L."/>
            <person name="Feltwell T."/>
            <person name="Hamlin N."/>
            <person name="Holroyd S."/>
            <person name="Jagels K."/>
            <person name="Moule S."/>
            <person name="Mungall K."/>
            <person name="Quail M.A."/>
            <person name="Price C."/>
            <person name="Rabbinowitsch E."/>
            <person name="Sharp S."/>
            <person name="Skelton J."/>
            <person name="Whitehead S."/>
            <person name="Barrell B.G."/>
            <person name="Kehoe M."/>
            <person name="Parkhill J."/>
        </authorList>
    </citation>
    <scope>NUCLEOTIDE SEQUENCE [LARGE SCALE GENOMIC DNA]</scope>
    <source>
        <strain>Manfredo</strain>
    </source>
</reference>
<evidence type="ECO:0000255" key="1">
    <source>
        <dbReference type="HAMAP-Rule" id="MF_00918"/>
    </source>
</evidence>
<keyword id="KW-0963">Cytoplasm</keyword>
<keyword id="KW-0238">DNA-binding</keyword>
<keyword id="KW-0804">Transcription</keyword>
<keyword id="KW-0805">Transcription regulation</keyword>
<comment type="subcellular location">
    <subcellularLocation>
        <location evidence="1">Cytoplasm</location>
    </subcellularLocation>
</comment>
<comment type="similarity">
    <text evidence="1">Belongs to the TACO1 family. YeeN subfamily.</text>
</comment>
<gene>
    <name type="ordered locus">SpyM51586</name>
</gene>
<organism>
    <name type="scientific">Streptococcus pyogenes serotype M5 (strain Manfredo)</name>
    <dbReference type="NCBI Taxonomy" id="160491"/>
    <lineage>
        <taxon>Bacteria</taxon>
        <taxon>Bacillati</taxon>
        <taxon>Bacillota</taxon>
        <taxon>Bacilli</taxon>
        <taxon>Lactobacillales</taxon>
        <taxon>Streptococcaceae</taxon>
        <taxon>Streptococcus</taxon>
    </lineage>
</organism>
<feature type="chain" id="PRO_1000045376" description="Probable transcriptional regulatory protein SpyM51586">
    <location>
        <begin position="1"/>
        <end position="238"/>
    </location>
</feature>
<accession>A2RGC8</accession>
<protein>
    <recommendedName>
        <fullName evidence="1">Probable transcriptional regulatory protein SpyM51586</fullName>
    </recommendedName>
</protein>
<dbReference type="EMBL" id="AM295007">
    <property type="protein sequence ID" value="CAM30907.1"/>
    <property type="molecule type" value="Genomic_DNA"/>
</dbReference>
<dbReference type="RefSeq" id="WP_011889137.1">
    <property type="nucleotide sequence ID" value="NC_009332.1"/>
</dbReference>
<dbReference type="SMR" id="A2RGC8"/>
<dbReference type="KEGG" id="spf:SpyM51586"/>
<dbReference type="HOGENOM" id="CLU_062974_2_0_9"/>
<dbReference type="GO" id="GO:0005829">
    <property type="term" value="C:cytosol"/>
    <property type="evidence" value="ECO:0007669"/>
    <property type="project" value="TreeGrafter"/>
</dbReference>
<dbReference type="GO" id="GO:0003677">
    <property type="term" value="F:DNA binding"/>
    <property type="evidence" value="ECO:0007669"/>
    <property type="project" value="UniProtKB-UniRule"/>
</dbReference>
<dbReference type="GO" id="GO:0006355">
    <property type="term" value="P:regulation of DNA-templated transcription"/>
    <property type="evidence" value="ECO:0007669"/>
    <property type="project" value="UniProtKB-UniRule"/>
</dbReference>
<dbReference type="FunFam" id="1.10.10.200:FF:000003">
    <property type="entry name" value="Probable transcriptional regulatory protein YeeN"/>
    <property type="match status" value="1"/>
</dbReference>
<dbReference type="FunFam" id="3.30.70.980:FF:000004">
    <property type="entry name" value="Probable transcriptional regulatory protein YeeN"/>
    <property type="match status" value="1"/>
</dbReference>
<dbReference type="Gene3D" id="1.10.10.200">
    <property type="match status" value="1"/>
</dbReference>
<dbReference type="Gene3D" id="3.30.70.980">
    <property type="match status" value="2"/>
</dbReference>
<dbReference type="HAMAP" id="MF_00693">
    <property type="entry name" value="Transcrip_reg_TACO1"/>
    <property type="match status" value="1"/>
</dbReference>
<dbReference type="HAMAP" id="MF_00918">
    <property type="entry name" value="Transcrip_reg_TACO1_YeeN"/>
    <property type="match status" value="1"/>
</dbReference>
<dbReference type="InterPro" id="IPR017856">
    <property type="entry name" value="Integrase-like_N"/>
</dbReference>
<dbReference type="InterPro" id="IPR048300">
    <property type="entry name" value="TACO1_YebC-like_2nd/3rd_dom"/>
</dbReference>
<dbReference type="InterPro" id="IPR049083">
    <property type="entry name" value="TACO1_YebC_N"/>
</dbReference>
<dbReference type="InterPro" id="IPR002876">
    <property type="entry name" value="Transcrip_reg_TACO1-like"/>
</dbReference>
<dbReference type="InterPro" id="IPR026564">
    <property type="entry name" value="Transcrip_reg_TACO1-like_dom3"/>
</dbReference>
<dbReference type="InterPro" id="IPR026562">
    <property type="entry name" value="Transcrip_reg_TACO1_YeeN"/>
</dbReference>
<dbReference type="InterPro" id="IPR029072">
    <property type="entry name" value="YebC-like"/>
</dbReference>
<dbReference type="NCBIfam" id="NF001030">
    <property type="entry name" value="PRK00110.1"/>
    <property type="match status" value="1"/>
</dbReference>
<dbReference type="NCBIfam" id="NF009044">
    <property type="entry name" value="PRK12378.1"/>
    <property type="match status" value="1"/>
</dbReference>
<dbReference type="NCBIfam" id="TIGR01033">
    <property type="entry name" value="YebC/PmpR family DNA-binding transcriptional regulator"/>
    <property type="match status" value="1"/>
</dbReference>
<dbReference type="PANTHER" id="PTHR12532">
    <property type="entry name" value="TRANSLATIONAL ACTIVATOR OF CYTOCHROME C OXIDASE 1"/>
    <property type="match status" value="1"/>
</dbReference>
<dbReference type="PANTHER" id="PTHR12532:SF0">
    <property type="entry name" value="TRANSLATIONAL ACTIVATOR OF CYTOCHROME C OXIDASE 1"/>
    <property type="match status" value="1"/>
</dbReference>
<dbReference type="Pfam" id="PF20772">
    <property type="entry name" value="TACO1_YebC_N"/>
    <property type="match status" value="1"/>
</dbReference>
<dbReference type="Pfam" id="PF01709">
    <property type="entry name" value="Transcrip_reg"/>
    <property type="match status" value="1"/>
</dbReference>
<dbReference type="SUPFAM" id="SSF75625">
    <property type="entry name" value="YebC-like"/>
    <property type="match status" value="1"/>
</dbReference>
<proteinExistence type="inferred from homology"/>
<sequence>MGRKWANIVAKKTAKDGATSKVYAKFGVEIYVAAKQGEPDPELNTTLKFVIDRAKQAQVPKHVIDKAIDKAKGNTDETFVEGRYEGFGPNGSMIIVDTLTSNVNRTAANVRTAYGKNGGNMGASGSVSYLFDKKGVIVFAGDDADSVFEQLLEADVDVDDVEAEEGTITVYTAPTDLHKGIQALRDNGVEEFQVTELEMIPQSEVVLEGDDLETFEKLIDALESDDDVQKVYHNVADF</sequence>
<name>Y1586_STRPG</name>